<accession>P0CR90</accession>
<accession>Q55LT0</accession>
<accession>Q5K8Z5</accession>
<protein>
    <recommendedName>
        <fullName>Mitochondrial import inner membrane translocase subunit TIM54</fullName>
    </recommendedName>
</protein>
<gene>
    <name type="primary">TIM54</name>
    <name type="ordered locus">CNL03940</name>
</gene>
<keyword id="KW-0472">Membrane</keyword>
<keyword id="KW-0496">Mitochondrion</keyword>
<keyword id="KW-0999">Mitochondrion inner membrane</keyword>
<keyword id="KW-0653">Protein transport</keyword>
<keyword id="KW-1185">Reference proteome</keyword>
<keyword id="KW-0811">Translocation</keyword>
<keyword id="KW-0812">Transmembrane</keyword>
<keyword id="KW-1133">Transmembrane helix</keyword>
<keyword id="KW-0813">Transport</keyword>
<sequence>MADLTPGARKPAPAELTGFRSALAHTGIPHGVLLWKPRLPSRNWLVFWSVSLSLSYAYYYDRAECKRIKQEVVERVEKYGREPMPGGSLGEPRRVVVWAGRWGGDDDADRAGRYFRKYVKPYLVAAGIDYTLPSVPLHGSITRQLHAAILLQRRQALGLAPTATPLSLPGVLDPAEAKRREVESGVVVVGRASLKEYLEGLRRGWECGVDEWAWETEVEKTLAGDGVFESVESPVEPAVETAETVVEPTADAVPKSNFGFLARPAPVTPGAPAIPAHLHTPPSPLPPTPPLLLLPFTNHLGFLQLPYMILDFFNERAKVRQGAQSALALIEGPTRDMHREDAEHWEEKSESWYNKTARQLPERLQKSRTEYYEAIKSRIDLARAYENGDREMTEEEKKANKVERIQDIQAERLKKELRWKGSEEGWEIVKPETPATWRDRWEGWLKVYQVPEDAQKGL</sequence>
<organism>
    <name type="scientific">Cryptococcus neoformans var. neoformans serotype D (strain JEC21 / ATCC MYA-565)</name>
    <name type="common">Filobasidiella neoformans</name>
    <dbReference type="NCBI Taxonomy" id="214684"/>
    <lineage>
        <taxon>Eukaryota</taxon>
        <taxon>Fungi</taxon>
        <taxon>Dikarya</taxon>
        <taxon>Basidiomycota</taxon>
        <taxon>Agaricomycotina</taxon>
        <taxon>Tremellomycetes</taxon>
        <taxon>Tremellales</taxon>
        <taxon>Cryptococcaceae</taxon>
        <taxon>Cryptococcus</taxon>
        <taxon>Cryptococcus neoformans species complex</taxon>
    </lineage>
</organism>
<name>TIM54_CRYNJ</name>
<comment type="function">
    <text evidence="1">Essential component of the TIM22 complex, a complex that mediates the import and insertion of multi-pass transmembrane proteins into the mitochondrial inner membrane. The TIM22 complex forms a twin-pore translocase that uses the membrane potential as external driving force (By similarity).</text>
</comment>
<comment type="subunit">
    <text evidence="1">Component of the TIM22 complex, whose core is composed of TIM22 and TIM54, associated with the 70 kDa heterohexamer composed of TIM9 and TIM10 (or TIM8 and TIM13).</text>
</comment>
<comment type="subcellular location">
    <subcellularLocation>
        <location evidence="1">Mitochondrion inner membrane</location>
        <topology evidence="1">Single-pass membrane protein</topology>
    </subcellularLocation>
</comment>
<comment type="similarity">
    <text evidence="3">Belongs to the TIM54 family.</text>
</comment>
<proteinExistence type="inferred from homology"/>
<feature type="chain" id="PRO_0000228014" description="Mitochondrial import inner membrane translocase subunit TIM54">
    <location>
        <begin position="1"/>
        <end position="458"/>
    </location>
</feature>
<feature type="topological domain" description="Mitochondrial matrix" evidence="2">
    <location>
        <begin position="1"/>
        <end position="43"/>
    </location>
</feature>
<feature type="transmembrane region" description="Helical" evidence="2">
    <location>
        <begin position="44"/>
        <end position="60"/>
    </location>
</feature>
<feature type="topological domain" description="Mitochondrial intermembrane" evidence="2">
    <location>
        <begin position="61"/>
        <end position="458"/>
    </location>
</feature>
<evidence type="ECO:0000250" key="1"/>
<evidence type="ECO:0000255" key="2"/>
<evidence type="ECO:0000305" key="3"/>
<dbReference type="EMBL" id="AE017352">
    <property type="protein sequence ID" value="AAW46435.1"/>
    <property type="molecule type" value="Genomic_DNA"/>
</dbReference>
<dbReference type="RefSeq" id="XP_567952.1">
    <property type="nucleotide sequence ID" value="XM_567952.1"/>
</dbReference>
<dbReference type="SMR" id="P0CR90"/>
<dbReference type="STRING" id="214684.P0CR90"/>
<dbReference type="PaxDb" id="214684-P0CR90"/>
<dbReference type="EnsemblFungi" id="AAW46435">
    <property type="protein sequence ID" value="AAW46435"/>
    <property type="gene ID" value="CNL03940"/>
</dbReference>
<dbReference type="GeneID" id="3254900"/>
<dbReference type="KEGG" id="cne:CNL03940"/>
<dbReference type="VEuPathDB" id="FungiDB:CNL03940"/>
<dbReference type="eggNOG" id="ENOG502QPMQ">
    <property type="taxonomic scope" value="Eukaryota"/>
</dbReference>
<dbReference type="HOGENOM" id="CLU_033744_0_0_1"/>
<dbReference type="InParanoid" id="P0CR90"/>
<dbReference type="OMA" id="RNWMIFF"/>
<dbReference type="OrthoDB" id="5598305at2759"/>
<dbReference type="Proteomes" id="UP000002149">
    <property type="component" value="Chromosome 12"/>
</dbReference>
<dbReference type="GO" id="GO:0005737">
    <property type="term" value="C:cytoplasm"/>
    <property type="evidence" value="ECO:0000318"/>
    <property type="project" value="GO_Central"/>
</dbReference>
<dbReference type="GO" id="GO:0043231">
    <property type="term" value="C:intracellular membrane-bounded organelle"/>
    <property type="evidence" value="ECO:0000318"/>
    <property type="project" value="GO_Central"/>
</dbReference>
<dbReference type="GO" id="GO:0016020">
    <property type="term" value="C:membrane"/>
    <property type="evidence" value="ECO:0000318"/>
    <property type="project" value="GO_Central"/>
</dbReference>
<dbReference type="GO" id="GO:0005743">
    <property type="term" value="C:mitochondrial inner membrane"/>
    <property type="evidence" value="ECO:0007669"/>
    <property type="project" value="UniProtKB-SubCell"/>
</dbReference>
<dbReference type="GO" id="GO:0015031">
    <property type="term" value="P:protein transport"/>
    <property type="evidence" value="ECO:0007669"/>
    <property type="project" value="UniProtKB-KW"/>
</dbReference>
<dbReference type="InterPro" id="IPR021056">
    <property type="entry name" value="Mt_import_IM_translocase_Tim54"/>
</dbReference>
<dbReference type="Pfam" id="PF11711">
    <property type="entry name" value="Tim54"/>
    <property type="match status" value="1"/>
</dbReference>
<reference key="1">
    <citation type="journal article" date="2005" name="Science">
        <title>The genome of the basidiomycetous yeast and human pathogen Cryptococcus neoformans.</title>
        <authorList>
            <person name="Loftus B.J."/>
            <person name="Fung E."/>
            <person name="Roncaglia P."/>
            <person name="Rowley D."/>
            <person name="Amedeo P."/>
            <person name="Bruno D."/>
            <person name="Vamathevan J."/>
            <person name="Miranda M."/>
            <person name="Anderson I.J."/>
            <person name="Fraser J.A."/>
            <person name="Allen J.E."/>
            <person name="Bosdet I.E."/>
            <person name="Brent M.R."/>
            <person name="Chiu R."/>
            <person name="Doering T.L."/>
            <person name="Donlin M.J."/>
            <person name="D'Souza C.A."/>
            <person name="Fox D.S."/>
            <person name="Grinberg V."/>
            <person name="Fu J."/>
            <person name="Fukushima M."/>
            <person name="Haas B.J."/>
            <person name="Huang J.C."/>
            <person name="Janbon G."/>
            <person name="Jones S.J.M."/>
            <person name="Koo H.L."/>
            <person name="Krzywinski M.I."/>
            <person name="Kwon-Chung K.J."/>
            <person name="Lengeler K.B."/>
            <person name="Maiti R."/>
            <person name="Marra M.A."/>
            <person name="Marra R.E."/>
            <person name="Mathewson C.A."/>
            <person name="Mitchell T.G."/>
            <person name="Pertea M."/>
            <person name="Riggs F.R."/>
            <person name="Salzberg S.L."/>
            <person name="Schein J.E."/>
            <person name="Shvartsbeyn A."/>
            <person name="Shin H."/>
            <person name="Shumway M."/>
            <person name="Specht C.A."/>
            <person name="Suh B.B."/>
            <person name="Tenney A."/>
            <person name="Utterback T.R."/>
            <person name="Wickes B.L."/>
            <person name="Wortman J.R."/>
            <person name="Wye N.H."/>
            <person name="Kronstad J.W."/>
            <person name="Lodge J.K."/>
            <person name="Heitman J."/>
            <person name="Davis R.W."/>
            <person name="Fraser C.M."/>
            <person name="Hyman R.W."/>
        </authorList>
    </citation>
    <scope>NUCLEOTIDE SEQUENCE [LARGE SCALE GENOMIC DNA]</scope>
    <source>
        <strain>JEC21 / ATCC MYA-565</strain>
    </source>
</reference>